<evidence type="ECO:0000255" key="1">
    <source>
        <dbReference type="PROSITE-ProRule" id="PRU00042"/>
    </source>
</evidence>
<evidence type="ECO:0000269" key="2">
    <source>
    </source>
</evidence>
<evidence type="ECO:0000269" key="3">
    <source>
    </source>
</evidence>
<evidence type="ECO:0000305" key="4"/>
<accession>P07665</accession>
<accession>Q9VAB5</accession>
<name>SRYB_DROME</name>
<comment type="function">
    <text>Binds to the consensus DNA sequence 5'-YCAGAGATGCGCA-3'.</text>
</comment>
<comment type="subunit">
    <text>Binds chromatin; requires N-terminal regions to form protein-protein contacts, in addition to DNA specific recognition by the zinc fingers.</text>
</comment>
<comment type="interaction">
    <interactant intactId="EBI-162141">
        <id>P07665</id>
    </interactant>
    <interactant intactId="EBI-166770">
        <id>Q7K5M2</id>
        <label>Dmel\CG10139</label>
    </interactant>
    <organismsDiffer>false</organismsDiffer>
    <experiments>2</experiments>
</comment>
<comment type="subcellular location">
    <subcellularLocation>
        <location evidence="2">Nucleus</location>
    </subcellularLocation>
</comment>
<comment type="developmental stage">
    <text evidence="2 3">Expressed both maternally and zygotically. Abundant in early embryos and present in very low amounts at every stage of the life-cycle.</text>
</comment>
<comment type="sequence caution" evidence="4">
    <conflict type="erroneous gene model prediction">
        <sequence resource="EMBL-CDS" id="CAA26896"/>
    </conflict>
</comment>
<dbReference type="EMBL" id="X03121">
    <property type="protein sequence ID" value="CAA26896.1"/>
    <property type="status" value="ALT_SEQ"/>
    <property type="molecule type" value="Genomic_DNA"/>
</dbReference>
<dbReference type="EMBL" id="AE014297">
    <property type="protein sequence ID" value="AAF56998.1"/>
    <property type="molecule type" value="Genomic_DNA"/>
</dbReference>
<dbReference type="EMBL" id="AY118322">
    <property type="protein sequence ID" value="AAM48351.1"/>
    <property type="molecule type" value="mRNA"/>
</dbReference>
<dbReference type="PIR" id="A23351">
    <property type="entry name" value="A23351"/>
</dbReference>
<dbReference type="RefSeq" id="NP_001303451.1">
    <property type="nucleotide sequence ID" value="NM_001316522.1"/>
</dbReference>
<dbReference type="RefSeq" id="NP_524579.1">
    <property type="nucleotide sequence ID" value="NM_079840.3"/>
</dbReference>
<dbReference type="SMR" id="P07665"/>
<dbReference type="BioGRID" id="68426">
    <property type="interactions" value="20"/>
</dbReference>
<dbReference type="FunCoup" id="P07665">
    <property type="interactions" value="217"/>
</dbReference>
<dbReference type="IntAct" id="P07665">
    <property type="interactions" value="14"/>
</dbReference>
<dbReference type="STRING" id="7227.FBpp0312401"/>
<dbReference type="PaxDb" id="7227-FBpp0084922"/>
<dbReference type="EnsemblMetazoa" id="FBtr0085556">
    <property type="protein sequence ID" value="FBpp0084922"/>
    <property type="gene ID" value="FBgn0003511"/>
</dbReference>
<dbReference type="EnsemblMetazoa" id="FBtr0346861">
    <property type="protein sequence ID" value="FBpp0312401"/>
    <property type="gene ID" value="FBgn0003511"/>
</dbReference>
<dbReference type="GeneID" id="43570"/>
<dbReference type="KEGG" id="dme:Dmel_CG7938"/>
<dbReference type="AGR" id="FB:FBgn0003511"/>
<dbReference type="CTD" id="43570"/>
<dbReference type="FlyBase" id="FBgn0003511">
    <property type="gene designation" value="Sry-beta"/>
</dbReference>
<dbReference type="VEuPathDB" id="VectorBase:FBgn0003511"/>
<dbReference type="eggNOG" id="KOG1721">
    <property type="taxonomic scope" value="Eukaryota"/>
</dbReference>
<dbReference type="GeneTree" id="ENSGT00940000162287"/>
<dbReference type="HOGENOM" id="CLU_776751_0_0_1"/>
<dbReference type="InParanoid" id="P07665"/>
<dbReference type="OMA" id="LECRYCS"/>
<dbReference type="OrthoDB" id="3533395at2759"/>
<dbReference type="PhylomeDB" id="P07665"/>
<dbReference type="BioGRID-ORCS" id="43570">
    <property type="hits" value="0 hits in 1 CRISPR screen"/>
</dbReference>
<dbReference type="GenomeRNAi" id="43570"/>
<dbReference type="PRO" id="PR:P07665"/>
<dbReference type="Proteomes" id="UP000000803">
    <property type="component" value="Chromosome 3R"/>
</dbReference>
<dbReference type="Bgee" id="FBgn0003511">
    <property type="expression patterns" value="Expressed in endoderm anlage (Drosophila) and 17 other cell types or tissues"/>
</dbReference>
<dbReference type="GO" id="GO:0005634">
    <property type="term" value="C:nucleus"/>
    <property type="evidence" value="ECO:0000314"/>
    <property type="project" value="UniProtKB"/>
</dbReference>
<dbReference type="GO" id="GO:0005705">
    <property type="term" value="C:polytene chromosome interband"/>
    <property type="evidence" value="ECO:0000314"/>
    <property type="project" value="UniProtKB"/>
</dbReference>
<dbReference type="GO" id="GO:0003677">
    <property type="term" value="F:DNA binding"/>
    <property type="evidence" value="ECO:0000314"/>
    <property type="project" value="UniProtKB"/>
</dbReference>
<dbReference type="GO" id="GO:0000981">
    <property type="term" value="F:DNA-binding transcription factor activity, RNA polymerase II-specific"/>
    <property type="evidence" value="ECO:0000318"/>
    <property type="project" value="GO_Central"/>
</dbReference>
<dbReference type="GO" id="GO:0000977">
    <property type="term" value="F:RNA polymerase II transcription regulatory region sequence-specific DNA binding"/>
    <property type="evidence" value="ECO:0000318"/>
    <property type="project" value="GO_Central"/>
</dbReference>
<dbReference type="GO" id="GO:0008270">
    <property type="term" value="F:zinc ion binding"/>
    <property type="evidence" value="ECO:0007669"/>
    <property type="project" value="UniProtKB-KW"/>
</dbReference>
<dbReference type="GO" id="GO:0006357">
    <property type="term" value="P:regulation of transcription by RNA polymerase II"/>
    <property type="evidence" value="ECO:0000318"/>
    <property type="project" value="GO_Central"/>
</dbReference>
<dbReference type="FunFam" id="3.30.160.60:FF:003481">
    <property type="entry name" value="Serendipity beta"/>
    <property type="match status" value="1"/>
</dbReference>
<dbReference type="Gene3D" id="3.30.160.60">
    <property type="entry name" value="Classic Zinc Finger"/>
    <property type="match status" value="4"/>
</dbReference>
<dbReference type="InterPro" id="IPR036236">
    <property type="entry name" value="Znf_C2H2_sf"/>
</dbReference>
<dbReference type="InterPro" id="IPR013087">
    <property type="entry name" value="Znf_C2H2_type"/>
</dbReference>
<dbReference type="PANTHER" id="PTHR24379:SF121">
    <property type="entry name" value="C2H2-TYPE DOMAIN-CONTAINING PROTEIN"/>
    <property type="match status" value="1"/>
</dbReference>
<dbReference type="PANTHER" id="PTHR24379">
    <property type="entry name" value="KRAB AND ZINC FINGER DOMAIN-CONTAINING"/>
    <property type="match status" value="1"/>
</dbReference>
<dbReference type="Pfam" id="PF00096">
    <property type="entry name" value="zf-C2H2"/>
    <property type="match status" value="4"/>
</dbReference>
<dbReference type="SMART" id="SM00355">
    <property type="entry name" value="ZnF_C2H2"/>
    <property type="match status" value="6"/>
</dbReference>
<dbReference type="SUPFAM" id="SSF57667">
    <property type="entry name" value="beta-beta-alpha zinc fingers"/>
    <property type="match status" value="3"/>
</dbReference>
<dbReference type="PROSITE" id="PS00028">
    <property type="entry name" value="ZINC_FINGER_C2H2_1"/>
    <property type="match status" value="5"/>
</dbReference>
<dbReference type="PROSITE" id="PS50157">
    <property type="entry name" value="ZINC_FINGER_C2H2_2"/>
    <property type="match status" value="5"/>
</dbReference>
<organism>
    <name type="scientific">Drosophila melanogaster</name>
    <name type="common">Fruit fly</name>
    <dbReference type="NCBI Taxonomy" id="7227"/>
    <lineage>
        <taxon>Eukaryota</taxon>
        <taxon>Metazoa</taxon>
        <taxon>Ecdysozoa</taxon>
        <taxon>Arthropoda</taxon>
        <taxon>Hexapoda</taxon>
        <taxon>Insecta</taxon>
        <taxon>Pterygota</taxon>
        <taxon>Neoptera</taxon>
        <taxon>Endopterygota</taxon>
        <taxon>Diptera</taxon>
        <taxon>Brachycera</taxon>
        <taxon>Muscomorpha</taxon>
        <taxon>Ephydroidea</taxon>
        <taxon>Drosophilidae</taxon>
        <taxon>Drosophila</taxon>
        <taxon>Sophophora</taxon>
    </lineage>
</organism>
<keyword id="KW-0217">Developmental protein</keyword>
<keyword id="KW-0238">DNA-binding</keyword>
<keyword id="KW-0479">Metal-binding</keyword>
<keyword id="KW-0539">Nucleus</keyword>
<keyword id="KW-1185">Reference proteome</keyword>
<keyword id="KW-0677">Repeat</keyword>
<keyword id="KW-0804">Transcription</keyword>
<keyword id="KW-0805">Transcription regulation</keyword>
<keyword id="KW-0862">Zinc</keyword>
<keyword id="KW-0863">Zinc-finger</keyword>
<gene>
    <name type="primary">Sry-beta</name>
    <name type="synonym">Sry-b</name>
    <name type="ORF">CG7938</name>
</gene>
<sequence>MSSTRPFCFVCGKEKSVGVFQLIEGCIVPGTFKPIKDILKYFEKIINQRLELLPNSAACRDCLEYLFNYDRLVRNLSQVQRQIADALLGCRQVEGKAETKQQAAKRARVQVPAFKIVQATALKEPERQPGEEDECEEFMKEEMLDEEFQFSEPDDSMPSSEEEFFTETTEIPCHICGEMFSSQEVLERHIKADTCQKSEQATCNVCGLKVKDDEVLDLHMNLHEGKTELECRYCDKKFSHKRNVLRHMEVHWDKKKYQCDKCGERFSLSWLMYNHLMRHDAEENALICEVCHQQFKTKRTYKHHLRTHQTDRPRYPCPDCEKSFVDKYTLKVHKRVHQPVEKPESAEAKEATVTFF</sequence>
<protein>
    <recommendedName>
        <fullName>Serendipity locus protein beta</fullName>
    </recommendedName>
</protein>
<reference key="1">
    <citation type="journal article" date="1985" name="J. Mol. Biol.">
        <title>Sequence and structure of the serendipity locus of Drosophila melanogaster. A densely transcribed region including a blastoderm-specific gene.</title>
        <authorList>
            <person name="Vincent A."/>
            <person name="Colot H.V."/>
            <person name="Rosbash M."/>
        </authorList>
    </citation>
    <scope>NUCLEOTIDE SEQUENCE [GENOMIC DNA]</scope>
    <scope>DEVELOPMENTAL STAGE</scope>
    <source>
        <strain>Oregon-R</strain>
    </source>
</reference>
<reference key="2">
    <citation type="journal article" date="2000" name="Science">
        <title>The genome sequence of Drosophila melanogaster.</title>
        <authorList>
            <person name="Adams M.D."/>
            <person name="Celniker S.E."/>
            <person name="Holt R.A."/>
            <person name="Evans C.A."/>
            <person name="Gocayne J.D."/>
            <person name="Amanatides P.G."/>
            <person name="Scherer S.E."/>
            <person name="Li P.W."/>
            <person name="Hoskins R.A."/>
            <person name="Galle R.F."/>
            <person name="George R.A."/>
            <person name="Lewis S.E."/>
            <person name="Richards S."/>
            <person name="Ashburner M."/>
            <person name="Henderson S.N."/>
            <person name="Sutton G.G."/>
            <person name="Wortman J.R."/>
            <person name="Yandell M.D."/>
            <person name="Zhang Q."/>
            <person name="Chen L.X."/>
            <person name="Brandon R.C."/>
            <person name="Rogers Y.-H.C."/>
            <person name="Blazej R.G."/>
            <person name="Champe M."/>
            <person name="Pfeiffer B.D."/>
            <person name="Wan K.H."/>
            <person name="Doyle C."/>
            <person name="Baxter E.G."/>
            <person name="Helt G."/>
            <person name="Nelson C.R."/>
            <person name="Miklos G.L.G."/>
            <person name="Abril J.F."/>
            <person name="Agbayani A."/>
            <person name="An H.-J."/>
            <person name="Andrews-Pfannkoch C."/>
            <person name="Baldwin D."/>
            <person name="Ballew R.M."/>
            <person name="Basu A."/>
            <person name="Baxendale J."/>
            <person name="Bayraktaroglu L."/>
            <person name="Beasley E.M."/>
            <person name="Beeson K.Y."/>
            <person name="Benos P.V."/>
            <person name="Berman B.P."/>
            <person name="Bhandari D."/>
            <person name="Bolshakov S."/>
            <person name="Borkova D."/>
            <person name="Botchan M.R."/>
            <person name="Bouck J."/>
            <person name="Brokstein P."/>
            <person name="Brottier P."/>
            <person name="Burtis K.C."/>
            <person name="Busam D.A."/>
            <person name="Butler H."/>
            <person name="Cadieu E."/>
            <person name="Center A."/>
            <person name="Chandra I."/>
            <person name="Cherry J.M."/>
            <person name="Cawley S."/>
            <person name="Dahlke C."/>
            <person name="Davenport L.B."/>
            <person name="Davies P."/>
            <person name="de Pablos B."/>
            <person name="Delcher A."/>
            <person name="Deng Z."/>
            <person name="Mays A.D."/>
            <person name="Dew I."/>
            <person name="Dietz S.M."/>
            <person name="Dodson K."/>
            <person name="Doup L.E."/>
            <person name="Downes M."/>
            <person name="Dugan-Rocha S."/>
            <person name="Dunkov B.C."/>
            <person name="Dunn P."/>
            <person name="Durbin K.J."/>
            <person name="Evangelista C.C."/>
            <person name="Ferraz C."/>
            <person name="Ferriera S."/>
            <person name="Fleischmann W."/>
            <person name="Fosler C."/>
            <person name="Gabrielian A.E."/>
            <person name="Garg N.S."/>
            <person name="Gelbart W.M."/>
            <person name="Glasser K."/>
            <person name="Glodek A."/>
            <person name="Gong F."/>
            <person name="Gorrell J.H."/>
            <person name="Gu Z."/>
            <person name="Guan P."/>
            <person name="Harris M."/>
            <person name="Harris N.L."/>
            <person name="Harvey D.A."/>
            <person name="Heiman T.J."/>
            <person name="Hernandez J.R."/>
            <person name="Houck J."/>
            <person name="Hostin D."/>
            <person name="Houston K.A."/>
            <person name="Howland T.J."/>
            <person name="Wei M.-H."/>
            <person name="Ibegwam C."/>
            <person name="Jalali M."/>
            <person name="Kalush F."/>
            <person name="Karpen G.H."/>
            <person name="Ke Z."/>
            <person name="Kennison J.A."/>
            <person name="Ketchum K.A."/>
            <person name="Kimmel B.E."/>
            <person name="Kodira C.D."/>
            <person name="Kraft C.L."/>
            <person name="Kravitz S."/>
            <person name="Kulp D."/>
            <person name="Lai Z."/>
            <person name="Lasko P."/>
            <person name="Lei Y."/>
            <person name="Levitsky A.A."/>
            <person name="Li J.H."/>
            <person name="Li Z."/>
            <person name="Liang Y."/>
            <person name="Lin X."/>
            <person name="Liu X."/>
            <person name="Mattei B."/>
            <person name="McIntosh T.C."/>
            <person name="McLeod M.P."/>
            <person name="McPherson D."/>
            <person name="Merkulov G."/>
            <person name="Milshina N.V."/>
            <person name="Mobarry C."/>
            <person name="Morris J."/>
            <person name="Moshrefi A."/>
            <person name="Mount S.M."/>
            <person name="Moy M."/>
            <person name="Murphy B."/>
            <person name="Murphy L."/>
            <person name="Muzny D.M."/>
            <person name="Nelson D.L."/>
            <person name="Nelson D.R."/>
            <person name="Nelson K.A."/>
            <person name="Nixon K."/>
            <person name="Nusskern D.R."/>
            <person name="Pacleb J.M."/>
            <person name="Palazzolo M."/>
            <person name="Pittman G.S."/>
            <person name="Pan S."/>
            <person name="Pollard J."/>
            <person name="Puri V."/>
            <person name="Reese M.G."/>
            <person name="Reinert K."/>
            <person name="Remington K."/>
            <person name="Saunders R.D.C."/>
            <person name="Scheeler F."/>
            <person name="Shen H."/>
            <person name="Shue B.C."/>
            <person name="Siden-Kiamos I."/>
            <person name="Simpson M."/>
            <person name="Skupski M.P."/>
            <person name="Smith T.J."/>
            <person name="Spier E."/>
            <person name="Spradling A.C."/>
            <person name="Stapleton M."/>
            <person name="Strong R."/>
            <person name="Sun E."/>
            <person name="Svirskas R."/>
            <person name="Tector C."/>
            <person name="Turner R."/>
            <person name="Venter E."/>
            <person name="Wang A.H."/>
            <person name="Wang X."/>
            <person name="Wang Z.-Y."/>
            <person name="Wassarman D.A."/>
            <person name="Weinstock G.M."/>
            <person name="Weissenbach J."/>
            <person name="Williams S.M."/>
            <person name="Woodage T."/>
            <person name="Worley K.C."/>
            <person name="Wu D."/>
            <person name="Yang S."/>
            <person name="Yao Q.A."/>
            <person name="Ye J."/>
            <person name="Yeh R.-F."/>
            <person name="Zaveri J.S."/>
            <person name="Zhan M."/>
            <person name="Zhang G."/>
            <person name="Zhao Q."/>
            <person name="Zheng L."/>
            <person name="Zheng X.H."/>
            <person name="Zhong F.N."/>
            <person name="Zhong W."/>
            <person name="Zhou X."/>
            <person name="Zhu S.C."/>
            <person name="Zhu X."/>
            <person name="Smith H.O."/>
            <person name="Gibbs R.A."/>
            <person name="Myers E.W."/>
            <person name="Rubin G.M."/>
            <person name="Venter J.C."/>
        </authorList>
    </citation>
    <scope>NUCLEOTIDE SEQUENCE [LARGE SCALE GENOMIC DNA]</scope>
    <source>
        <strain>Berkeley</strain>
    </source>
</reference>
<reference key="3">
    <citation type="journal article" date="2002" name="Genome Biol.">
        <title>Annotation of the Drosophila melanogaster euchromatic genome: a systematic review.</title>
        <authorList>
            <person name="Misra S."/>
            <person name="Crosby M.A."/>
            <person name="Mungall C.J."/>
            <person name="Matthews B.B."/>
            <person name="Campbell K.S."/>
            <person name="Hradecky P."/>
            <person name="Huang Y."/>
            <person name="Kaminker J.S."/>
            <person name="Millburn G.H."/>
            <person name="Prochnik S.E."/>
            <person name="Smith C.D."/>
            <person name="Tupy J.L."/>
            <person name="Whitfield E.J."/>
            <person name="Bayraktaroglu L."/>
            <person name="Berman B.P."/>
            <person name="Bettencourt B.R."/>
            <person name="Celniker S.E."/>
            <person name="de Grey A.D.N.J."/>
            <person name="Drysdale R.A."/>
            <person name="Harris N.L."/>
            <person name="Richter J."/>
            <person name="Russo S."/>
            <person name="Schroeder A.J."/>
            <person name="Shu S.Q."/>
            <person name="Stapleton M."/>
            <person name="Yamada C."/>
            <person name="Ashburner M."/>
            <person name="Gelbart W.M."/>
            <person name="Rubin G.M."/>
            <person name="Lewis S.E."/>
        </authorList>
    </citation>
    <scope>GENOME REANNOTATION</scope>
    <source>
        <strain>Berkeley</strain>
    </source>
</reference>
<reference key="4">
    <citation type="journal article" date="2002" name="Genome Biol.">
        <title>A Drosophila full-length cDNA resource.</title>
        <authorList>
            <person name="Stapleton M."/>
            <person name="Carlson J.W."/>
            <person name="Brokstein P."/>
            <person name="Yu C."/>
            <person name="Champe M."/>
            <person name="George R.A."/>
            <person name="Guarin H."/>
            <person name="Kronmiller B."/>
            <person name="Pacleb J.M."/>
            <person name="Park S."/>
            <person name="Wan K.H."/>
            <person name="Rubin G.M."/>
            <person name="Celniker S.E."/>
        </authorList>
    </citation>
    <scope>NUCLEOTIDE SEQUENCE [LARGE SCALE MRNA]</scope>
    <source>
        <strain>Berkeley</strain>
        <tissue>Embryo</tissue>
    </source>
</reference>
<reference key="5">
    <citation type="journal article" date="1990" name="Development">
        <title>The closely related Drosophila sry beta and sry delta zinc finger proteins show differential embryonic expression and distinct patterns of binding sites on polytene chromosomes.</title>
        <authorList>
            <person name="Payre F."/>
            <person name="Noselli S."/>
            <person name="Lefrere V."/>
            <person name="Vincent A."/>
        </authorList>
    </citation>
    <scope>DNA-BINDING</scope>
    <scope>SUBCELLULAR LOCATION</scope>
    <scope>DEVELOPMENTAL STAGE</scope>
</reference>
<reference key="6">
    <citation type="journal article" date="1991" name="EMBO J.">
        <title>Genomic targets of the serendipity beta and delta zinc finger proteins and their respective DNA recognition sites.</title>
        <authorList>
            <person name="Payre F."/>
            <person name="Vincent A."/>
        </authorList>
    </citation>
    <scope>DNA-BINDING SPECIFICITY</scope>
</reference>
<reference key="7">
    <citation type="journal article" date="1992" name="Mol. Cell. Biol.">
        <title>Zinc fingers and other domains cooperate in binding of Drosophila sry beta and delta proteins at specific chromosomal sites.</title>
        <authorList>
            <person name="Noselli S."/>
            <person name="Payre F."/>
            <person name="Vincent A."/>
        </authorList>
    </citation>
    <scope>DNA-BINDING SPECIFICITY</scope>
</reference>
<feature type="chain" id="PRO_0000047049" description="Serendipity locus protein beta">
    <location>
        <begin position="1"/>
        <end position="356"/>
    </location>
</feature>
<feature type="zinc finger region" description="C2H2-type 1; degenerate" evidence="1">
    <location>
        <begin position="171"/>
        <end position="193"/>
    </location>
</feature>
<feature type="zinc finger region" description="C2H2-type 2" evidence="1">
    <location>
        <begin position="201"/>
        <end position="223"/>
    </location>
</feature>
<feature type="zinc finger region" description="C2H2-type 3" evidence="1">
    <location>
        <begin position="229"/>
        <end position="251"/>
    </location>
</feature>
<feature type="zinc finger region" description="C2H2-type 4" evidence="1">
    <location>
        <begin position="257"/>
        <end position="279"/>
    </location>
</feature>
<feature type="zinc finger region" description="C2H2-type 5" evidence="1">
    <location>
        <begin position="286"/>
        <end position="308"/>
    </location>
</feature>
<feature type="zinc finger region" description="C2H2-type 6" evidence="1">
    <location>
        <begin position="315"/>
        <end position="337"/>
    </location>
</feature>
<proteinExistence type="evidence at protein level"/>